<name>YPMF_ECOLX</name>
<protein>
    <recommendedName>
        <fullName>Uncharacterized mobilization operon protein F</fullName>
    </recommendedName>
</protein>
<reference key="1">
    <citation type="journal article" date="1987" name="Mol. Gen. Genet.">
        <title>Mobilization of the non-conjugative plasmid RSF1010: a genetic and DNA sequence analysis of the mobilization region.</title>
        <authorList>
            <person name="Derbyshire K.M."/>
            <person name="Hatfull G."/>
            <person name="Willetts N."/>
        </authorList>
    </citation>
    <scope>NUCLEOTIDE SEQUENCE [GENOMIC DNA]</scope>
</reference>
<accession>P07116</accession>
<proteinExistence type="predicted"/>
<dbReference type="EMBL" id="X04830">
    <property type="protein sequence ID" value="CAA28518.1"/>
    <property type="molecule type" value="Genomic_DNA"/>
</dbReference>
<dbReference type="PIR" id="S07319">
    <property type="entry name" value="S07319"/>
</dbReference>
<feature type="chain" id="PRO_0000068513" description="Uncharacterized mobilization operon protein F">
    <location>
        <begin position="1"/>
        <end position="147"/>
    </location>
</feature>
<organism>
    <name type="scientific">Escherichia coli</name>
    <dbReference type="NCBI Taxonomy" id="562"/>
    <lineage>
        <taxon>Bacteria</taxon>
        <taxon>Pseudomonadati</taxon>
        <taxon>Pseudomonadota</taxon>
        <taxon>Gammaproteobacteria</taxon>
        <taxon>Enterobacterales</taxon>
        <taxon>Enterobacteriaceae</taxon>
        <taxon>Escherichia</taxon>
    </lineage>
</organism>
<sequence length="147" mass="16208">MCSPAGPVSVDHSARLILLAWRQTEQGAVVVAFKVRIHCRHEPILRPLAAVHLGQNHGPHQHLAPCFVLALLLLFPCPHPLNFGIDSRSLFFELGQPIRRLVAPLNHLDTPLLMCCLVGYHGGTAAAIPTLLCRGGRTYRFLFEKLA</sequence>
<keyword id="KW-0614">Plasmid</keyword>
<geneLocation type="plasmid">
    <name>IncQ RSF1010</name>
</geneLocation>